<proteinExistence type="inferred from homology"/>
<dbReference type="EC" id="6.2.1.5" evidence="1"/>
<dbReference type="EMBL" id="AE006470">
    <property type="protein sequence ID" value="AAM71626.1"/>
    <property type="molecule type" value="Genomic_DNA"/>
</dbReference>
<dbReference type="RefSeq" id="NP_661284.1">
    <property type="nucleotide sequence ID" value="NC_002932.3"/>
</dbReference>
<dbReference type="RefSeq" id="WP_010932072.1">
    <property type="nucleotide sequence ID" value="NC_002932.3"/>
</dbReference>
<dbReference type="SMR" id="Q8KFE7"/>
<dbReference type="STRING" id="194439.CT0380"/>
<dbReference type="EnsemblBacteria" id="AAM71626">
    <property type="protein sequence ID" value="AAM71626"/>
    <property type="gene ID" value="CT0380"/>
</dbReference>
<dbReference type="KEGG" id="cte:CT0380"/>
<dbReference type="PATRIC" id="fig|194439.7.peg.366"/>
<dbReference type="eggNOG" id="COG0045">
    <property type="taxonomic scope" value="Bacteria"/>
</dbReference>
<dbReference type="HOGENOM" id="CLU_037430_0_2_10"/>
<dbReference type="OrthoDB" id="9802602at2"/>
<dbReference type="UniPathway" id="UPA00223">
    <property type="reaction ID" value="UER00999"/>
</dbReference>
<dbReference type="Proteomes" id="UP000001007">
    <property type="component" value="Chromosome"/>
</dbReference>
<dbReference type="GO" id="GO:0005829">
    <property type="term" value="C:cytosol"/>
    <property type="evidence" value="ECO:0007669"/>
    <property type="project" value="TreeGrafter"/>
</dbReference>
<dbReference type="GO" id="GO:0042709">
    <property type="term" value="C:succinate-CoA ligase complex"/>
    <property type="evidence" value="ECO:0007669"/>
    <property type="project" value="TreeGrafter"/>
</dbReference>
<dbReference type="GO" id="GO:0005524">
    <property type="term" value="F:ATP binding"/>
    <property type="evidence" value="ECO:0007669"/>
    <property type="project" value="UniProtKB-UniRule"/>
</dbReference>
<dbReference type="GO" id="GO:0000287">
    <property type="term" value="F:magnesium ion binding"/>
    <property type="evidence" value="ECO:0007669"/>
    <property type="project" value="UniProtKB-UniRule"/>
</dbReference>
<dbReference type="GO" id="GO:0004775">
    <property type="term" value="F:succinate-CoA ligase (ADP-forming) activity"/>
    <property type="evidence" value="ECO:0007669"/>
    <property type="project" value="UniProtKB-UniRule"/>
</dbReference>
<dbReference type="GO" id="GO:0004776">
    <property type="term" value="F:succinate-CoA ligase (GDP-forming) activity"/>
    <property type="evidence" value="ECO:0007669"/>
    <property type="project" value="RHEA"/>
</dbReference>
<dbReference type="GO" id="GO:0006104">
    <property type="term" value="P:succinyl-CoA metabolic process"/>
    <property type="evidence" value="ECO:0007669"/>
    <property type="project" value="TreeGrafter"/>
</dbReference>
<dbReference type="GO" id="GO:0006099">
    <property type="term" value="P:tricarboxylic acid cycle"/>
    <property type="evidence" value="ECO:0007669"/>
    <property type="project" value="UniProtKB-UniRule"/>
</dbReference>
<dbReference type="FunFam" id="3.30.1490.20:FF:000002">
    <property type="entry name" value="Succinate--CoA ligase [ADP-forming] subunit beta"/>
    <property type="match status" value="1"/>
</dbReference>
<dbReference type="FunFam" id="3.30.470.20:FF:000002">
    <property type="entry name" value="Succinate--CoA ligase [ADP-forming] subunit beta"/>
    <property type="match status" value="1"/>
</dbReference>
<dbReference type="FunFam" id="3.40.50.261:FF:000001">
    <property type="entry name" value="Succinate--CoA ligase [ADP-forming] subunit beta"/>
    <property type="match status" value="1"/>
</dbReference>
<dbReference type="Gene3D" id="3.30.1490.20">
    <property type="entry name" value="ATP-grasp fold, A domain"/>
    <property type="match status" value="1"/>
</dbReference>
<dbReference type="Gene3D" id="3.30.470.20">
    <property type="entry name" value="ATP-grasp fold, B domain"/>
    <property type="match status" value="1"/>
</dbReference>
<dbReference type="Gene3D" id="3.40.50.261">
    <property type="entry name" value="Succinyl-CoA synthetase domains"/>
    <property type="match status" value="1"/>
</dbReference>
<dbReference type="HAMAP" id="MF_00558">
    <property type="entry name" value="Succ_CoA_beta"/>
    <property type="match status" value="1"/>
</dbReference>
<dbReference type="InterPro" id="IPR011761">
    <property type="entry name" value="ATP-grasp"/>
</dbReference>
<dbReference type="InterPro" id="IPR013650">
    <property type="entry name" value="ATP-grasp_succ-CoA_synth-type"/>
</dbReference>
<dbReference type="InterPro" id="IPR013815">
    <property type="entry name" value="ATP_grasp_subdomain_1"/>
</dbReference>
<dbReference type="InterPro" id="IPR017866">
    <property type="entry name" value="Succ-CoA_synthase_bsu_CS"/>
</dbReference>
<dbReference type="InterPro" id="IPR005811">
    <property type="entry name" value="SUCC_ACL_C"/>
</dbReference>
<dbReference type="InterPro" id="IPR005809">
    <property type="entry name" value="Succ_CoA_ligase-like_bsu"/>
</dbReference>
<dbReference type="InterPro" id="IPR016102">
    <property type="entry name" value="Succinyl-CoA_synth-like"/>
</dbReference>
<dbReference type="NCBIfam" id="NF001913">
    <property type="entry name" value="PRK00696.1"/>
    <property type="match status" value="1"/>
</dbReference>
<dbReference type="NCBIfam" id="TIGR01016">
    <property type="entry name" value="sucCoAbeta"/>
    <property type="match status" value="1"/>
</dbReference>
<dbReference type="PANTHER" id="PTHR11815:SF10">
    <property type="entry name" value="SUCCINATE--COA LIGASE [GDP-FORMING] SUBUNIT BETA, MITOCHONDRIAL"/>
    <property type="match status" value="1"/>
</dbReference>
<dbReference type="PANTHER" id="PTHR11815">
    <property type="entry name" value="SUCCINYL-COA SYNTHETASE BETA CHAIN"/>
    <property type="match status" value="1"/>
</dbReference>
<dbReference type="Pfam" id="PF08442">
    <property type="entry name" value="ATP-grasp_2"/>
    <property type="match status" value="1"/>
</dbReference>
<dbReference type="Pfam" id="PF00549">
    <property type="entry name" value="Ligase_CoA"/>
    <property type="match status" value="1"/>
</dbReference>
<dbReference type="PIRSF" id="PIRSF001554">
    <property type="entry name" value="SucCS_beta"/>
    <property type="match status" value="1"/>
</dbReference>
<dbReference type="SUPFAM" id="SSF56059">
    <property type="entry name" value="Glutathione synthetase ATP-binding domain-like"/>
    <property type="match status" value="1"/>
</dbReference>
<dbReference type="SUPFAM" id="SSF52210">
    <property type="entry name" value="Succinyl-CoA synthetase domains"/>
    <property type="match status" value="1"/>
</dbReference>
<dbReference type="PROSITE" id="PS50975">
    <property type="entry name" value="ATP_GRASP"/>
    <property type="match status" value="1"/>
</dbReference>
<dbReference type="PROSITE" id="PS01217">
    <property type="entry name" value="SUCCINYL_COA_LIG_3"/>
    <property type="match status" value="1"/>
</dbReference>
<organism>
    <name type="scientific">Chlorobaculum tepidum (strain ATCC 49652 / DSM 12025 / NBRC 103806 / TLS)</name>
    <name type="common">Chlorobium tepidum</name>
    <dbReference type="NCBI Taxonomy" id="194439"/>
    <lineage>
        <taxon>Bacteria</taxon>
        <taxon>Pseudomonadati</taxon>
        <taxon>Chlorobiota</taxon>
        <taxon>Chlorobiia</taxon>
        <taxon>Chlorobiales</taxon>
        <taxon>Chlorobiaceae</taxon>
        <taxon>Chlorobaculum</taxon>
    </lineage>
</organism>
<reference key="1">
    <citation type="journal article" date="2002" name="Proc. Natl. Acad. Sci. U.S.A.">
        <title>The complete genome sequence of Chlorobium tepidum TLS, a photosynthetic, anaerobic, green-sulfur bacterium.</title>
        <authorList>
            <person name="Eisen J.A."/>
            <person name="Nelson K.E."/>
            <person name="Paulsen I.T."/>
            <person name="Heidelberg J.F."/>
            <person name="Wu M."/>
            <person name="Dodson R.J."/>
            <person name="DeBoy R.T."/>
            <person name="Gwinn M.L."/>
            <person name="Nelson W.C."/>
            <person name="Haft D.H."/>
            <person name="Hickey E.K."/>
            <person name="Peterson J.D."/>
            <person name="Durkin A.S."/>
            <person name="Kolonay J.F."/>
            <person name="Yang F."/>
            <person name="Holt I.E."/>
            <person name="Umayam L.A."/>
            <person name="Mason T.M."/>
            <person name="Brenner M."/>
            <person name="Shea T.P."/>
            <person name="Parksey D.S."/>
            <person name="Nierman W.C."/>
            <person name="Feldblyum T.V."/>
            <person name="Hansen C.L."/>
            <person name="Craven M.B."/>
            <person name="Radune D."/>
            <person name="Vamathevan J.J."/>
            <person name="Khouri H.M."/>
            <person name="White O."/>
            <person name="Gruber T.M."/>
            <person name="Ketchum K.A."/>
            <person name="Venter J.C."/>
            <person name="Tettelin H."/>
            <person name="Bryant D.A."/>
            <person name="Fraser C.M."/>
        </authorList>
    </citation>
    <scope>NUCLEOTIDE SEQUENCE [LARGE SCALE GENOMIC DNA]</scope>
    <source>
        <strain>ATCC 49652 / DSM 12025 / NBRC 103806 / TLS</strain>
    </source>
</reference>
<keyword id="KW-0067">ATP-binding</keyword>
<keyword id="KW-0436">Ligase</keyword>
<keyword id="KW-0460">Magnesium</keyword>
<keyword id="KW-0479">Metal-binding</keyword>
<keyword id="KW-0547">Nucleotide-binding</keyword>
<keyword id="KW-1185">Reference proteome</keyword>
<keyword id="KW-0816">Tricarboxylic acid cycle</keyword>
<feature type="chain" id="PRO_0000102827" description="Succinate--CoA ligase [ADP-forming] subunit beta">
    <location>
        <begin position="1"/>
        <end position="392"/>
    </location>
</feature>
<feature type="domain" description="ATP-grasp" evidence="1">
    <location>
        <begin position="9"/>
        <end position="248"/>
    </location>
</feature>
<feature type="binding site" evidence="1">
    <location>
        <position position="50"/>
    </location>
    <ligand>
        <name>ATP</name>
        <dbReference type="ChEBI" id="CHEBI:30616"/>
    </ligand>
</feature>
<feature type="binding site" evidence="1">
    <location>
        <begin position="57"/>
        <end position="59"/>
    </location>
    <ligand>
        <name>ATP</name>
        <dbReference type="ChEBI" id="CHEBI:30616"/>
    </ligand>
</feature>
<feature type="binding site" evidence="1">
    <location>
        <position position="103"/>
    </location>
    <ligand>
        <name>ATP</name>
        <dbReference type="ChEBI" id="CHEBI:30616"/>
    </ligand>
</feature>
<feature type="binding site" evidence="1">
    <location>
        <position position="106"/>
    </location>
    <ligand>
        <name>ATP</name>
        <dbReference type="ChEBI" id="CHEBI:30616"/>
    </ligand>
</feature>
<feature type="binding site" evidence="1">
    <location>
        <position position="111"/>
    </location>
    <ligand>
        <name>ATP</name>
        <dbReference type="ChEBI" id="CHEBI:30616"/>
    </ligand>
</feature>
<feature type="binding site" evidence="1">
    <location>
        <position position="203"/>
    </location>
    <ligand>
        <name>Mg(2+)</name>
        <dbReference type="ChEBI" id="CHEBI:18420"/>
    </ligand>
</feature>
<feature type="binding site" evidence="1">
    <location>
        <position position="217"/>
    </location>
    <ligand>
        <name>Mg(2+)</name>
        <dbReference type="ChEBI" id="CHEBI:18420"/>
    </ligand>
</feature>
<feature type="binding site" evidence="1">
    <location>
        <position position="268"/>
    </location>
    <ligand>
        <name>substrate</name>
        <note>ligand shared with subunit alpha</note>
    </ligand>
</feature>
<feature type="binding site" evidence="1">
    <location>
        <begin position="325"/>
        <end position="327"/>
    </location>
    <ligand>
        <name>substrate</name>
        <note>ligand shared with subunit alpha</note>
    </ligand>
</feature>
<name>SUCC_CHLTE</name>
<accession>Q8KFE7</accession>
<comment type="function">
    <text evidence="1">Succinyl-CoA synthetase functions in the citric acid cycle (TCA), coupling the hydrolysis of succinyl-CoA to the synthesis of either ATP or GTP and thus represents the only step of substrate-level phosphorylation in the TCA. The beta subunit provides nucleotide specificity of the enzyme and binds the substrate succinate, while the binding sites for coenzyme A and phosphate are found in the alpha subunit.</text>
</comment>
<comment type="catalytic activity">
    <reaction evidence="1">
        <text>succinate + ATP + CoA = succinyl-CoA + ADP + phosphate</text>
        <dbReference type="Rhea" id="RHEA:17661"/>
        <dbReference type="ChEBI" id="CHEBI:30031"/>
        <dbReference type="ChEBI" id="CHEBI:30616"/>
        <dbReference type="ChEBI" id="CHEBI:43474"/>
        <dbReference type="ChEBI" id="CHEBI:57287"/>
        <dbReference type="ChEBI" id="CHEBI:57292"/>
        <dbReference type="ChEBI" id="CHEBI:456216"/>
        <dbReference type="EC" id="6.2.1.5"/>
    </reaction>
    <physiologicalReaction direction="right-to-left" evidence="1">
        <dbReference type="Rhea" id="RHEA:17663"/>
    </physiologicalReaction>
</comment>
<comment type="catalytic activity">
    <reaction evidence="1">
        <text>GTP + succinate + CoA = succinyl-CoA + GDP + phosphate</text>
        <dbReference type="Rhea" id="RHEA:22120"/>
        <dbReference type="ChEBI" id="CHEBI:30031"/>
        <dbReference type="ChEBI" id="CHEBI:37565"/>
        <dbReference type="ChEBI" id="CHEBI:43474"/>
        <dbReference type="ChEBI" id="CHEBI:57287"/>
        <dbReference type="ChEBI" id="CHEBI:57292"/>
        <dbReference type="ChEBI" id="CHEBI:58189"/>
    </reaction>
    <physiologicalReaction direction="right-to-left" evidence="1">
        <dbReference type="Rhea" id="RHEA:22122"/>
    </physiologicalReaction>
</comment>
<comment type="cofactor">
    <cofactor evidence="1">
        <name>Mg(2+)</name>
        <dbReference type="ChEBI" id="CHEBI:18420"/>
    </cofactor>
    <text evidence="1">Binds 1 Mg(2+) ion per subunit.</text>
</comment>
<comment type="pathway">
    <text evidence="1">Carbohydrate metabolism; tricarboxylic acid cycle; succinate from succinyl-CoA (ligase route): step 1/1.</text>
</comment>
<comment type="subunit">
    <text evidence="1">Heterotetramer of two alpha and two beta subunits.</text>
</comment>
<comment type="similarity">
    <text evidence="1">Belongs to the succinate/malate CoA ligase beta subunit family.</text>
</comment>
<protein>
    <recommendedName>
        <fullName evidence="1">Succinate--CoA ligase [ADP-forming] subunit beta</fullName>
        <ecNumber evidence="1">6.2.1.5</ecNumber>
    </recommendedName>
    <alternativeName>
        <fullName evidence="1">Succinyl-CoA synthetase subunit beta</fullName>
        <shortName evidence="1">SCS-beta</shortName>
    </alternativeName>
</protein>
<evidence type="ECO:0000255" key="1">
    <source>
        <dbReference type="HAMAP-Rule" id="MF_00558"/>
    </source>
</evidence>
<sequence>MNIHEYQGKGILKQFGVAVPKGIVAFSAEEAKQAAEQLFEEQSSPVVVVKAQIHAGGRGKAGGVKLAKSPEEVFEIAQKMLGATLVTHQTGPEGKEVRRLLIEEGMNIDKEFYLGITLDRTTSSNVLMVSTEGGMEIEKVAEETPEKLLKIHVDPVYGLQGFQARKAAFFLGLQGEQFRNGVKFIEALYNAYTTIDASLAEINPLVITKEGRVLALDAKINFDDNALYRHSDFHDLRDITEEDPLEYEASKSNLNYVRLDGNVGCMVNGAGLAMGTMDLIQLSGGRPANFLDVGGGASSKTVEEGFKIILGDKNVKAILVNIFGGIVRCDRVAGGIIEAAKNIGLKVPVIVRLEGTNATEAQKMLDESGLNLISAKGLRDAAEKVQKALATA</sequence>
<gene>
    <name evidence="1" type="primary">sucC</name>
    <name type="ordered locus">CT0380</name>
</gene>